<proteinExistence type="evidence at transcript level"/>
<keyword id="KW-0148">Chlorophyll</keyword>
<keyword id="KW-0150">Chloroplast</keyword>
<keyword id="KW-0157">Chromophore</keyword>
<keyword id="KW-0460">Magnesium</keyword>
<keyword id="KW-0472">Membrane</keyword>
<keyword id="KW-0479">Metal-binding</keyword>
<keyword id="KW-0597">Phosphoprotein</keyword>
<keyword id="KW-0602">Photosynthesis</keyword>
<keyword id="KW-0603">Photosystem I</keyword>
<keyword id="KW-0604">Photosystem II</keyword>
<keyword id="KW-0934">Plastid</keyword>
<keyword id="KW-0793">Thylakoid</keyword>
<keyword id="KW-0809">Transit peptide</keyword>
<keyword id="KW-0812">Transmembrane</keyword>
<keyword id="KW-1133">Transmembrane helix</keyword>
<organism>
    <name type="scientific">Dunaliella salina</name>
    <name type="common">Green alga</name>
    <name type="synonym">Protococcus salinus</name>
    <dbReference type="NCBI Taxonomy" id="3046"/>
    <lineage>
        <taxon>Eukaryota</taxon>
        <taxon>Viridiplantae</taxon>
        <taxon>Chlorophyta</taxon>
        <taxon>core chlorophytes</taxon>
        <taxon>Chlorophyceae</taxon>
        <taxon>CS clade</taxon>
        <taxon>Chlamydomonadales</taxon>
        <taxon>Dunaliellaceae</taxon>
        <taxon>Dunaliella</taxon>
    </lineage>
</organism>
<reference key="1">
    <citation type="journal article" date="1989" name="Gene">
        <title>Cloning and nucleotide sequence analysis of genes coding for the major chlorophyll-binding protein of the moss Physcomitrella patens and the halotolerant alga Dunaliella salina.</title>
        <authorList>
            <person name="Long Z."/>
            <person name="Wang S.Y."/>
            <person name="Nelson N."/>
        </authorList>
    </citation>
    <scope>NUCLEOTIDE SEQUENCE [MRNA]</scope>
</reference>
<dbReference type="EMBL" id="M23531">
    <property type="protein sequence ID" value="AAA33278.1"/>
    <property type="molecule type" value="mRNA"/>
</dbReference>
<dbReference type="PIR" id="JS0172">
    <property type="entry name" value="JS0172"/>
</dbReference>
<dbReference type="SMR" id="P20865"/>
<dbReference type="GO" id="GO:0009535">
    <property type="term" value="C:chloroplast thylakoid membrane"/>
    <property type="evidence" value="ECO:0007669"/>
    <property type="project" value="UniProtKB-SubCell"/>
</dbReference>
<dbReference type="GO" id="GO:0009522">
    <property type="term" value="C:photosystem I"/>
    <property type="evidence" value="ECO:0007669"/>
    <property type="project" value="UniProtKB-KW"/>
</dbReference>
<dbReference type="GO" id="GO:0009523">
    <property type="term" value="C:photosystem II"/>
    <property type="evidence" value="ECO:0007669"/>
    <property type="project" value="UniProtKB-KW"/>
</dbReference>
<dbReference type="GO" id="GO:0016168">
    <property type="term" value="F:chlorophyll binding"/>
    <property type="evidence" value="ECO:0007669"/>
    <property type="project" value="UniProtKB-KW"/>
</dbReference>
<dbReference type="GO" id="GO:0046872">
    <property type="term" value="F:metal ion binding"/>
    <property type="evidence" value="ECO:0007669"/>
    <property type="project" value="UniProtKB-KW"/>
</dbReference>
<dbReference type="GO" id="GO:0009765">
    <property type="term" value="P:photosynthesis, light harvesting"/>
    <property type="evidence" value="ECO:0007669"/>
    <property type="project" value="InterPro"/>
</dbReference>
<dbReference type="Gene3D" id="1.10.3460.10">
    <property type="entry name" value="Chlorophyll a/b binding protein domain"/>
    <property type="match status" value="1"/>
</dbReference>
<dbReference type="InterPro" id="IPR001344">
    <property type="entry name" value="Chloro_AB-bd_pln"/>
</dbReference>
<dbReference type="InterPro" id="IPR022796">
    <property type="entry name" value="Chloroa_b-bind"/>
</dbReference>
<dbReference type="PANTHER" id="PTHR21649">
    <property type="entry name" value="CHLOROPHYLL A/B BINDING PROTEIN"/>
    <property type="match status" value="1"/>
</dbReference>
<dbReference type="Pfam" id="PF00504">
    <property type="entry name" value="Chloroa_b-bind"/>
    <property type="match status" value="1"/>
</dbReference>
<dbReference type="SUPFAM" id="SSF103511">
    <property type="entry name" value="Chlorophyll a-b binding protein"/>
    <property type="match status" value="1"/>
</dbReference>
<feature type="transit peptide" description="Chloroplast" evidence="4">
    <location>
        <begin position="1"/>
        <end status="unknown"/>
    </location>
</feature>
<feature type="chain" id="PRO_0000003657" description="Chlorophyll a-b binding protein of LHCII type I, chloroplastic">
    <location>
        <begin status="unknown"/>
        <end position="273"/>
    </location>
</feature>
<feature type="transmembrane region" description="Helical" evidence="4">
    <location>
        <begin position="106"/>
        <end position="126"/>
    </location>
</feature>
<feature type="transmembrane region" description="Helical" evidence="4">
    <location>
        <begin position="136"/>
        <end position="156"/>
    </location>
</feature>
<feature type="transmembrane region" description="Helical" evidence="4">
    <location>
        <begin position="160"/>
        <end position="180"/>
    </location>
</feature>
<feature type="transmembrane region" description="Helical" evidence="4">
    <location>
        <begin position="228"/>
        <end position="248"/>
    </location>
</feature>
<feature type="region of interest" description="Disordered" evidence="5">
    <location>
        <begin position="1"/>
        <end position="65"/>
    </location>
</feature>
<feature type="compositionally biased region" description="Low complexity" evidence="5">
    <location>
        <begin position="45"/>
        <end position="54"/>
    </location>
</feature>
<feature type="binding site" description="axial binding residue" evidence="1">
    <location>
        <position position="66"/>
    </location>
    <ligand>
        <name>chlorophyll b</name>
        <dbReference type="ChEBI" id="CHEBI:61721"/>
        <label>1</label>
    </ligand>
    <ligandPart>
        <name>Mg</name>
        <dbReference type="ChEBI" id="CHEBI:25107"/>
    </ligandPart>
</feature>
<feature type="binding site" evidence="1">
    <location>
        <position position="86"/>
    </location>
    <ligand>
        <name>chlorophyll a</name>
        <dbReference type="ChEBI" id="CHEBI:58416"/>
        <label>1</label>
    </ligand>
</feature>
<feature type="binding site" evidence="1">
    <location>
        <position position="92"/>
    </location>
    <ligand>
        <name>chlorophyll a</name>
        <dbReference type="ChEBI" id="CHEBI:58416"/>
        <label>1</label>
    </ligand>
</feature>
<feature type="binding site" description="axial binding residue" evidence="3">
    <location>
        <position position="105"/>
    </location>
    <ligand>
        <name>chlorophyll a</name>
        <dbReference type="ChEBI" id="CHEBI:58416"/>
        <label>1</label>
    </ligand>
    <ligandPart>
        <name>Mg</name>
        <dbReference type="ChEBI" id="CHEBI:25107"/>
    </ligandPart>
</feature>
<feature type="binding site" description="axial binding residue" evidence="3">
    <location>
        <position position="108"/>
    </location>
    <ligand>
        <name>chlorophyll a</name>
        <dbReference type="ChEBI" id="CHEBI:58416"/>
        <label>2</label>
    </ligand>
    <ligandPart>
        <name>Mg</name>
        <dbReference type="ChEBI" id="CHEBI:25107"/>
    </ligandPart>
</feature>
<feature type="binding site" evidence="1">
    <location>
        <position position="110"/>
    </location>
    <ligand>
        <name>chlorophyll b</name>
        <dbReference type="ChEBI" id="CHEBI:61721"/>
        <label>2</label>
    </ligand>
</feature>
<feature type="binding site" evidence="1">
    <location>
        <position position="155"/>
    </location>
    <ligand>
        <name>chlorophyll a</name>
        <dbReference type="ChEBI" id="CHEBI:58416"/>
        <label>3</label>
    </ligand>
</feature>
<feature type="binding site" description="axial binding residue" evidence="1">
    <location>
        <position position="161"/>
    </location>
    <ligand>
        <name>chlorophyll b</name>
        <dbReference type="ChEBI" id="CHEBI:61721"/>
        <label>2</label>
    </ligand>
    <ligandPart>
        <name>Mg</name>
        <dbReference type="ChEBI" id="CHEBI:25107"/>
    </ligandPart>
</feature>
<feature type="binding site" evidence="1">
    <location>
        <position position="173"/>
    </location>
    <ligand>
        <name>chlorophyll b</name>
        <dbReference type="ChEBI" id="CHEBI:61721"/>
        <label>4</label>
    </ligand>
</feature>
<feature type="binding site" evidence="2">
    <location>
        <position position="173"/>
    </location>
    <ligand>
        <name>chlorophyll b</name>
        <dbReference type="ChEBI" id="CHEBI:61721"/>
        <label>5</label>
    </ligand>
</feature>
<feature type="binding site" description="axial binding residue" evidence="3">
    <location>
        <position position="181"/>
    </location>
    <ligand>
        <name>chlorophyll b</name>
        <dbReference type="ChEBI" id="CHEBI:61721"/>
        <label>3</label>
    </ligand>
    <ligandPart>
        <name>Mg</name>
        <dbReference type="ChEBI" id="CHEBI:25107"/>
    </ligandPart>
</feature>
<feature type="binding site" evidence="1">
    <location>
        <position position="184"/>
    </location>
    <ligand>
        <name>chlorophyll b</name>
        <dbReference type="ChEBI" id="CHEBI:61721"/>
        <label>4</label>
    </ligand>
</feature>
<feature type="binding site" evidence="1">
    <location>
        <position position="221"/>
    </location>
    <ligand>
        <name>chlorophyll a</name>
        <dbReference type="ChEBI" id="CHEBI:58416"/>
        <label>5</label>
    </ligand>
</feature>
<feature type="binding site" description="axial binding residue" evidence="3">
    <location>
        <position position="222"/>
    </location>
    <ligand>
        <name>chlorophyll a</name>
        <dbReference type="ChEBI" id="CHEBI:58416"/>
        <label>3</label>
    </ligand>
    <ligandPart>
        <name>Mg</name>
        <dbReference type="ChEBI" id="CHEBI:25107"/>
    </ligandPart>
</feature>
<feature type="binding site" description="axial binding residue" evidence="3">
    <location>
        <position position="225"/>
    </location>
    <ligand>
        <name>chlorophyll a</name>
        <dbReference type="ChEBI" id="CHEBI:58416"/>
        <label>4</label>
    </ligand>
    <ligandPart>
        <name>Mg</name>
        <dbReference type="ChEBI" id="CHEBI:25107"/>
    </ligandPart>
</feature>
<feature type="binding site" evidence="1">
    <location>
        <position position="227"/>
    </location>
    <ligand>
        <name>chlorophyll a</name>
        <dbReference type="ChEBI" id="CHEBI:58416"/>
        <label>1</label>
    </ligand>
</feature>
<feature type="binding site" description="axial binding residue" evidence="3">
    <location>
        <position position="239"/>
    </location>
    <ligand>
        <name>chlorophyll a</name>
        <dbReference type="ChEBI" id="CHEBI:58416"/>
        <label>5</label>
    </ligand>
    <ligandPart>
        <name>Mg</name>
        <dbReference type="ChEBI" id="CHEBI:25107"/>
    </ligandPart>
</feature>
<feature type="binding site" description="axial binding residue" evidence="3">
    <location>
        <position position="254"/>
    </location>
    <ligand>
        <name>chlorophyll a</name>
        <dbReference type="ChEBI" id="CHEBI:58416"/>
        <label>6</label>
    </ligand>
    <ligandPart>
        <name>Mg</name>
        <dbReference type="ChEBI" id="CHEBI:25107"/>
    </ligandPart>
</feature>
<feature type="binding site" evidence="1">
    <location>
        <position position="263"/>
    </location>
    <ligand>
        <name>chlorophyll a</name>
        <dbReference type="ChEBI" id="CHEBI:58416"/>
        <label>6</label>
    </ligand>
</feature>
<feature type="binding site" evidence="1">
    <location>
        <position position="270"/>
    </location>
    <ligand>
        <name>chlorophyll b</name>
        <dbReference type="ChEBI" id="CHEBI:61721"/>
        <label>5</label>
    </ligand>
</feature>
<name>CB2_DUNSA</name>
<comment type="function">
    <text>The light-harvesting complex (LHC) functions as a light receptor, it captures and delivers excitation energy to photosystems with which it is closely associated.</text>
</comment>
<comment type="cofactor">
    <text evidence="1">Binds at least 14 chlorophylls (8 Chl-a and 6 Chl-b) and carotenoids such as lutein and neoxanthin.</text>
</comment>
<comment type="subunit">
    <text>The LHC complex consists of chlorophyll a-b binding proteins.</text>
</comment>
<comment type="subcellular location">
    <subcellularLocation>
        <location>Plastid</location>
        <location>Chloroplast thylakoid membrane</location>
        <topology>Multi-pass membrane protein</topology>
    </subcellularLocation>
</comment>
<comment type="domain">
    <text>The N-terminus of the protein extends into the stroma where it is involved with adhesion of granal membranes and post-translational modifications; both are believed to mediate the distribution of excitation energy between photosystems I and II.</text>
</comment>
<comment type="PTM">
    <text evidence="1">Photoregulated by reversible phosphorylation of its threonine residues.</text>
</comment>
<comment type="similarity">
    <text evidence="6">Belongs to the light-harvesting chlorophyll a/b-binding (LHC) protein family.</text>
</comment>
<evidence type="ECO:0000250" key="1"/>
<evidence type="ECO:0000250" key="2">
    <source>
        <dbReference type="UniProtKB" id="P07371"/>
    </source>
</evidence>
<evidence type="ECO:0000250" key="3">
    <source>
        <dbReference type="UniProtKB" id="P12333"/>
    </source>
</evidence>
<evidence type="ECO:0000255" key="4"/>
<evidence type="ECO:0000256" key="5">
    <source>
        <dbReference type="SAM" id="MobiDB-lite"/>
    </source>
</evidence>
<evidence type="ECO:0000305" key="6"/>
<protein>
    <recommendedName>
        <fullName>Chlorophyll a-b binding protein of LHCII type I, chloroplastic</fullName>
        <shortName>CAB</shortName>
        <shortName>LHCP</shortName>
    </recommendedName>
</protein>
<sequence>MQLSTPPEVPDMKNTYSNNECPAAEQELCSEQGGRAGKSTKKGAKAVSKSSSSANQFYGPDATSGWDLQHQHPRLPTGEFPGDYGWDTAGLSADPETFKRYRELELIHARCGLLGALGMVTPELLADEDGIKFGDAAIWFKAGAAIFQDGGLNYLGNPSLIHAQNIVATLAVQVVLMGLVEGYRVNGGPAGEGLDPLYPGEAFDPLGLADDPDTFAELKVKEIKNGRLAMFACLGFFVQAIVTGKGPIENLTDHLANPAENNAFAYATKFTPQ</sequence>
<accession>P20865</accession>